<feature type="chain" id="PRO_1000048452" description="Isopentenyl-diphosphate delta-isomerase">
    <location>
        <begin position="1"/>
        <end position="354"/>
    </location>
</feature>
<feature type="binding site" evidence="1">
    <location>
        <begin position="6"/>
        <end position="7"/>
    </location>
    <ligand>
        <name>substrate</name>
    </ligand>
</feature>
<feature type="binding site" evidence="1">
    <location>
        <begin position="63"/>
        <end position="65"/>
    </location>
    <ligand>
        <name>FMN</name>
        <dbReference type="ChEBI" id="CHEBI:58210"/>
    </ligand>
</feature>
<feature type="binding site" evidence="1">
    <location>
        <begin position="93"/>
        <end position="95"/>
    </location>
    <ligand>
        <name>substrate</name>
    </ligand>
</feature>
<feature type="binding site" evidence="1">
    <location>
        <position position="93"/>
    </location>
    <ligand>
        <name>FMN</name>
        <dbReference type="ChEBI" id="CHEBI:58210"/>
    </ligand>
</feature>
<feature type="binding site" evidence="1">
    <location>
        <position position="122"/>
    </location>
    <ligand>
        <name>FMN</name>
        <dbReference type="ChEBI" id="CHEBI:58210"/>
    </ligand>
</feature>
<feature type="binding site" evidence="1">
    <location>
        <position position="160"/>
    </location>
    <ligand>
        <name>substrate</name>
    </ligand>
</feature>
<feature type="binding site" evidence="1">
    <location>
        <position position="161"/>
    </location>
    <ligand>
        <name>Mg(2+)</name>
        <dbReference type="ChEBI" id="CHEBI:18420"/>
    </ligand>
</feature>
<feature type="binding site" evidence="1">
    <location>
        <position position="192"/>
    </location>
    <ligand>
        <name>FMN</name>
        <dbReference type="ChEBI" id="CHEBI:58210"/>
    </ligand>
</feature>
<feature type="binding site" evidence="1">
    <location>
        <position position="221"/>
    </location>
    <ligand>
        <name>FMN</name>
        <dbReference type="ChEBI" id="CHEBI:58210"/>
    </ligand>
</feature>
<feature type="binding site" evidence="1">
    <location>
        <begin position="273"/>
        <end position="275"/>
    </location>
    <ligand>
        <name>FMN</name>
        <dbReference type="ChEBI" id="CHEBI:58210"/>
    </ligand>
</feature>
<feature type="binding site" evidence="1">
    <location>
        <begin position="294"/>
        <end position="295"/>
    </location>
    <ligand>
        <name>FMN</name>
        <dbReference type="ChEBI" id="CHEBI:58210"/>
    </ligand>
</feature>
<comment type="function">
    <text evidence="1">Involved in the biosynthesis of isoprenoids. Catalyzes the 1,3-allylic rearrangement of the homoallylic substrate isopentenyl (IPP) to its allylic isomer, dimethylallyl diphosphate (DMAPP).</text>
</comment>
<comment type="catalytic activity">
    <reaction evidence="1">
        <text>isopentenyl diphosphate = dimethylallyl diphosphate</text>
        <dbReference type="Rhea" id="RHEA:23284"/>
        <dbReference type="ChEBI" id="CHEBI:57623"/>
        <dbReference type="ChEBI" id="CHEBI:128769"/>
        <dbReference type="EC" id="5.3.3.2"/>
    </reaction>
</comment>
<comment type="cofactor">
    <cofactor evidence="1">
        <name>FMN</name>
        <dbReference type="ChEBI" id="CHEBI:58210"/>
    </cofactor>
</comment>
<comment type="cofactor">
    <cofactor evidence="1">
        <name>NADPH</name>
        <dbReference type="ChEBI" id="CHEBI:57783"/>
    </cofactor>
</comment>
<comment type="cofactor">
    <cofactor evidence="1">
        <name>Mg(2+)</name>
        <dbReference type="ChEBI" id="CHEBI:18420"/>
    </cofactor>
</comment>
<comment type="subunit">
    <text evidence="1">Homooctamer. Dimer of tetramers.</text>
</comment>
<comment type="subcellular location">
    <subcellularLocation>
        <location evidence="1">Cytoplasm</location>
    </subcellularLocation>
</comment>
<comment type="similarity">
    <text evidence="1">Belongs to the IPP isomerase type 2 family.</text>
</comment>
<proteinExistence type="inferred from homology"/>
<evidence type="ECO:0000255" key="1">
    <source>
        <dbReference type="HAMAP-Rule" id="MF_00354"/>
    </source>
</evidence>
<protein>
    <recommendedName>
        <fullName evidence="1">Isopentenyl-diphosphate delta-isomerase</fullName>
        <shortName evidence="1">IPP isomerase</shortName>
        <ecNumber evidence="1">5.3.3.2</ecNumber>
    </recommendedName>
    <alternativeName>
        <fullName evidence="1">Isopentenyl diphosphate:dimethylallyl diphosphate isomerase</fullName>
    </alternativeName>
    <alternativeName>
        <fullName evidence="1">Isopentenyl pyrophosphate isomerase</fullName>
    </alternativeName>
    <alternativeName>
        <fullName evidence="1">Type 2 isopentenyl diphosphate isomerase</fullName>
        <shortName evidence="1">IDI-2</shortName>
    </alternativeName>
</protein>
<gene>
    <name evidence="1" type="primary">fni</name>
    <name type="ordered locus">Pisl_1093</name>
</gene>
<name>IDI2_PYRIL</name>
<accession>A1RTI3</accession>
<dbReference type="EC" id="5.3.3.2" evidence="1"/>
<dbReference type="EMBL" id="CP000504">
    <property type="protein sequence ID" value="ABL88265.1"/>
    <property type="molecule type" value="Genomic_DNA"/>
</dbReference>
<dbReference type="RefSeq" id="WP_011762840.1">
    <property type="nucleotide sequence ID" value="NC_008701.1"/>
</dbReference>
<dbReference type="SMR" id="A1RTI3"/>
<dbReference type="STRING" id="384616.Pisl_1093"/>
<dbReference type="GeneID" id="4616935"/>
<dbReference type="KEGG" id="pis:Pisl_1093"/>
<dbReference type="eggNOG" id="arCOG00613">
    <property type="taxonomic scope" value="Archaea"/>
</dbReference>
<dbReference type="HOGENOM" id="CLU_065515_1_0_2"/>
<dbReference type="OrthoDB" id="371955at2157"/>
<dbReference type="Proteomes" id="UP000002595">
    <property type="component" value="Chromosome"/>
</dbReference>
<dbReference type="GO" id="GO:0005737">
    <property type="term" value="C:cytoplasm"/>
    <property type="evidence" value="ECO:0007669"/>
    <property type="project" value="UniProtKB-SubCell"/>
</dbReference>
<dbReference type="GO" id="GO:0010181">
    <property type="term" value="F:FMN binding"/>
    <property type="evidence" value="ECO:0007669"/>
    <property type="project" value="UniProtKB-UniRule"/>
</dbReference>
<dbReference type="GO" id="GO:0004452">
    <property type="term" value="F:isopentenyl-diphosphate delta-isomerase activity"/>
    <property type="evidence" value="ECO:0007669"/>
    <property type="project" value="UniProtKB-UniRule"/>
</dbReference>
<dbReference type="GO" id="GO:0000287">
    <property type="term" value="F:magnesium ion binding"/>
    <property type="evidence" value="ECO:0007669"/>
    <property type="project" value="UniProtKB-UniRule"/>
</dbReference>
<dbReference type="GO" id="GO:0070402">
    <property type="term" value="F:NADPH binding"/>
    <property type="evidence" value="ECO:0007669"/>
    <property type="project" value="UniProtKB-UniRule"/>
</dbReference>
<dbReference type="GO" id="GO:0016491">
    <property type="term" value="F:oxidoreductase activity"/>
    <property type="evidence" value="ECO:0007669"/>
    <property type="project" value="InterPro"/>
</dbReference>
<dbReference type="GO" id="GO:0008299">
    <property type="term" value="P:isoprenoid biosynthetic process"/>
    <property type="evidence" value="ECO:0007669"/>
    <property type="project" value="UniProtKB-UniRule"/>
</dbReference>
<dbReference type="CDD" id="cd02811">
    <property type="entry name" value="IDI-2_FMN"/>
    <property type="match status" value="1"/>
</dbReference>
<dbReference type="Gene3D" id="3.20.20.70">
    <property type="entry name" value="Aldolase class I"/>
    <property type="match status" value="1"/>
</dbReference>
<dbReference type="HAMAP" id="MF_00354">
    <property type="entry name" value="Idi_2"/>
    <property type="match status" value="1"/>
</dbReference>
<dbReference type="InterPro" id="IPR013785">
    <property type="entry name" value="Aldolase_TIM"/>
</dbReference>
<dbReference type="InterPro" id="IPR000262">
    <property type="entry name" value="FMN-dep_DH"/>
</dbReference>
<dbReference type="InterPro" id="IPR011179">
    <property type="entry name" value="IPdP_isomerase"/>
</dbReference>
<dbReference type="NCBIfam" id="TIGR02151">
    <property type="entry name" value="IPP_isom_2"/>
    <property type="match status" value="1"/>
</dbReference>
<dbReference type="PANTHER" id="PTHR43665">
    <property type="entry name" value="ISOPENTENYL-DIPHOSPHATE DELTA-ISOMERASE"/>
    <property type="match status" value="1"/>
</dbReference>
<dbReference type="PANTHER" id="PTHR43665:SF1">
    <property type="entry name" value="ISOPENTENYL-DIPHOSPHATE DELTA-ISOMERASE"/>
    <property type="match status" value="1"/>
</dbReference>
<dbReference type="Pfam" id="PF01070">
    <property type="entry name" value="FMN_dh"/>
    <property type="match status" value="1"/>
</dbReference>
<dbReference type="PIRSF" id="PIRSF003314">
    <property type="entry name" value="IPP_isomerase"/>
    <property type="match status" value="1"/>
</dbReference>
<dbReference type="SMART" id="SM01240">
    <property type="entry name" value="IMPDH"/>
    <property type="match status" value="1"/>
</dbReference>
<dbReference type="SUPFAM" id="SSF51395">
    <property type="entry name" value="FMN-linked oxidoreductases"/>
    <property type="match status" value="1"/>
</dbReference>
<reference key="1">
    <citation type="submission" date="2006-12" db="EMBL/GenBank/DDBJ databases">
        <title>Complete sequence of Pyrobaculum islandicum DSM 4184.</title>
        <authorList>
            <person name="Copeland A."/>
            <person name="Lucas S."/>
            <person name="Lapidus A."/>
            <person name="Barry K."/>
            <person name="Detter J.C."/>
            <person name="Glavina del Rio T."/>
            <person name="Dalin E."/>
            <person name="Tice H."/>
            <person name="Pitluck S."/>
            <person name="Meincke L."/>
            <person name="Brettin T."/>
            <person name="Bruce D."/>
            <person name="Han C."/>
            <person name="Tapia R."/>
            <person name="Gilna P."/>
            <person name="Schmutz J."/>
            <person name="Larimer F."/>
            <person name="Land M."/>
            <person name="Hauser L."/>
            <person name="Kyrpides N."/>
            <person name="Mikhailova N."/>
            <person name="Cozen A.E."/>
            <person name="Fitz-Gibbon S.T."/>
            <person name="House C.H."/>
            <person name="Saltikov C."/>
            <person name="Lowe T."/>
            <person name="Richardson P."/>
        </authorList>
    </citation>
    <scope>NUCLEOTIDE SEQUENCE [LARGE SCALE GENOMIC DNA]</scope>
    <source>
        <strain>DSM 4184 / JCM 9189 / GEO3</strain>
    </source>
</reference>
<sequence length="354" mass="38310">MAIDKRKNDHIYLASSEISQVGSPWFDEVILLHNALPEIDLSEVDITTRFLGVKVNAPFGIGAMTGGTELAGKINAELAKIAEEFGIPIYVGSQRVALMKPEVRWTFEVVKKNAPSVPKVANLGAPQLAELSDEKLAEWVSQAVDMIDAYAIAIHLNAAQEVIQPEGEPRFRGVFEKIKVVRKAAGRPVIVKEVGNGISKEVASRLVEVADAIDVGGYGGTSFIAIEGARAAESGSSMRRRVAEVFKSWGIPTAASICEARSGYRGYIIASGGIRSGLDGAKALALGADFFTMSQPFLKAALEGRLREEIETVIAEVKIAMFLTGSRTIEDLKSAPRVYGPRLRNWIEQRKLVC</sequence>
<organism>
    <name type="scientific">Pyrobaculum islandicum (strain DSM 4184 / JCM 9189 / GEO3)</name>
    <dbReference type="NCBI Taxonomy" id="384616"/>
    <lineage>
        <taxon>Archaea</taxon>
        <taxon>Thermoproteota</taxon>
        <taxon>Thermoprotei</taxon>
        <taxon>Thermoproteales</taxon>
        <taxon>Thermoproteaceae</taxon>
        <taxon>Pyrobaculum</taxon>
    </lineage>
</organism>
<keyword id="KW-0963">Cytoplasm</keyword>
<keyword id="KW-0285">Flavoprotein</keyword>
<keyword id="KW-0288">FMN</keyword>
<keyword id="KW-0413">Isomerase</keyword>
<keyword id="KW-0414">Isoprene biosynthesis</keyword>
<keyword id="KW-0460">Magnesium</keyword>
<keyword id="KW-0479">Metal-binding</keyword>
<keyword id="KW-0521">NADP</keyword>